<keyword id="KW-0328">Glycosyltransferase</keyword>
<keyword id="KW-0441">Lipid A biosynthesis</keyword>
<keyword id="KW-0444">Lipid biosynthesis</keyword>
<keyword id="KW-0443">Lipid metabolism</keyword>
<keyword id="KW-0808">Transferase</keyword>
<sequence length="392" mass="43181">MSNKTPLVFAMVAGELSGDILGAGLMAALQKNHPDARFVGIGGPRMEALGFRSLFAMEELAVMGIVEVLSRLPRLLTVRASLIKEITALKPDCFIGIDAPDFNIGLELKLKARGIKTVHYVSPSVWAWRPKRIFKIAKATHMVLSLLPFEKAFYDQHQVPCTFVGHTLADDIPFQSDKAAARALLGLDADAEYLAILPGSRGGELKQLAEPFVKAALLIRQNFPDIRFVTPLVNQKRRDQFEQALKDFAPDLEIHMIEGQSREVMAAADGILLASGTATLEAMLVKRPMVVAYRVSPITYRIAKRMMQVERFSLPNLLAGKDLVPELIQEDCTPEKIAAAVTLELNRDFAPLKAEFEALHQVLRRDASLKAAEAVMALVEPKHTQAKSPEAN</sequence>
<comment type="function">
    <text evidence="1">Condensation of UDP-2,3-diacylglucosamine and 2,3-diacylglucosamine-1-phosphate to form lipid A disaccharide, a precursor of lipid A, a phosphorylated glycolipid that anchors the lipopolysaccharide to the outer membrane of the cell.</text>
</comment>
<comment type="catalytic activity">
    <reaction evidence="1">
        <text>a lipid X + a UDP-2-N,3-O-bis[(3R)-3-hydroxyacyl]-alpha-D-glucosamine = a lipid A disaccharide + UDP + H(+)</text>
        <dbReference type="Rhea" id="RHEA:67828"/>
        <dbReference type="ChEBI" id="CHEBI:15378"/>
        <dbReference type="ChEBI" id="CHEBI:58223"/>
        <dbReference type="ChEBI" id="CHEBI:137748"/>
        <dbReference type="ChEBI" id="CHEBI:176338"/>
        <dbReference type="ChEBI" id="CHEBI:176343"/>
        <dbReference type="EC" id="2.4.1.182"/>
    </reaction>
</comment>
<comment type="pathway">
    <text evidence="1">Bacterial outer membrane biogenesis; LPS lipid A biosynthesis.</text>
</comment>
<comment type="similarity">
    <text evidence="1">Belongs to the LpxB family.</text>
</comment>
<protein>
    <recommendedName>
        <fullName evidence="1">Lipid-A-disaccharide synthase</fullName>
        <ecNumber evidence="1">2.4.1.182</ecNumber>
    </recommendedName>
</protein>
<gene>
    <name evidence="1" type="primary">lpxB</name>
    <name type="ordered locus">Sbal223_2889</name>
</gene>
<proteinExistence type="inferred from homology"/>
<name>LPXB_SHEB2</name>
<accession>B8E7Q3</accession>
<evidence type="ECO:0000255" key="1">
    <source>
        <dbReference type="HAMAP-Rule" id="MF_00392"/>
    </source>
</evidence>
<reference key="1">
    <citation type="submission" date="2008-12" db="EMBL/GenBank/DDBJ databases">
        <title>Complete sequence of chromosome of Shewanella baltica OS223.</title>
        <authorList>
            <consortium name="US DOE Joint Genome Institute"/>
            <person name="Lucas S."/>
            <person name="Copeland A."/>
            <person name="Lapidus A."/>
            <person name="Glavina del Rio T."/>
            <person name="Dalin E."/>
            <person name="Tice H."/>
            <person name="Bruce D."/>
            <person name="Goodwin L."/>
            <person name="Pitluck S."/>
            <person name="Chertkov O."/>
            <person name="Meincke L."/>
            <person name="Brettin T."/>
            <person name="Detter J.C."/>
            <person name="Han C."/>
            <person name="Kuske C.R."/>
            <person name="Larimer F."/>
            <person name="Land M."/>
            <person name="Hauser L."/>
            <person name="Kyrpides N."/>
            <person name="Ovchinnikova G."/>
            <person name="Brettar I."/>
            <person name="Rodrigues J."/>
            <person name="Konstantinidis K."/>
            <person name="Tiedje J."/>
        </authorList>
    </citation>
    <scope>NUCLEOTIDE SEQUENCE [LARGE SCALE GENOMIC DNA]</scope>
    <source>
        <strain>OS223</strain>
    </source>
</reference>
<feature type="chain" id="PRO_1000191490" description="Lipid-A-disaccharide synthase">
    <location>
        <begin position="1"/>
        <end position="392"/>
    </location>
</feature>
<organism>
    <name type="scientific">Shewanella baltica (strain OS223)</name>
    <dbReference type="NCBI Taxonomy" id="407976"/>
    <lineage>
        <taxon>Bacteria</taxon>
        <taxon>Pseudomonadati</taxon>
        <taxon>Pseudomonadota</taxon>
        <taxon>Gammaproteobacteria</taxon>
        <taxon>Alteromonadales</taxon>
        <taxon>Shewanellaceae</taxon>
        <taxon>Shewanella</taxon>
    </lineage>
</organism>
<dbReference type="EC" id="2.4.1.182" evidence="1"/>
<dbReference type="EMBL" id="CP001252">
    <property type="protein sequence ID" value="ACK47375.1"/>
    <property type="molecule type" value="Genomic_DNA"/>
</dbReference>
<dbReference type="RefSeq" id="WP_012588123.1">
    <property type="nucleotide sequence ID" value="NC_011663.1"/>
</dbReference>
<dbReference type="SMR" id="B8E7Q3"/>
<dbReference type="CAZy" id="GT19">
    <property type="family name" value="Glycosyltransferase Family 19"/>
</dbReference>
<dbReference type="KEGG" id="sbp:Sbal223_2889"/>
<dbReference type="HOGENOM" id="CLU_036577_3_0_6"/>
<dbReference type="UniPathway" id="UPA00973"/>
<dbReference type="Proteomes" id="UP000002507">
    <property type="component" value="Chromosome"/>
</dbReference>
<dbReference type="GO" id="GO:0016020">
    <property type="term" value="C:membrane"/>
    <property type="evidence" value="ECO:0007669"/>
    <property type="project" value="GOC"/>
</dbReference>
<dbReference type="GO" id="GO:0008915">
    <property type="term" value="F:lipid-A-disaccharide synthase activity"/>
    <property type="evidence" value="ECO:0007669"/>
    <property type="project" value="UniProtKB-UniRule"/>
</dbReference>
<dbReference type="GO" id="GO:0005543">
    <property type="term" value="F:phospholipid binding"/>
    <property type="evidence" value="ECO:0007669"/>
    <property type="project" value="TreeGrafter"/>
</dbReference>
<dbReference type="GO" id="GO:0009245">
    <property type="term" value="P:lipid A biosynthetic process"/>
    <property type="evidence" value="ECO:0007669"/>
    <property type="project" value="UniProtKB-UniRule"/>
</dbReference>
<dbReference type="CDD" id="cd01635">
    <property type="entry name" value="Glycosyltransferase_GTB-type"/>
    <property type="match status" value="1"/>
</dbReference>
<dbReference type="HAMAP" id="MF_00392">
    <property type="entry name" value="LpxB"/>
    <property type="match status" value="1"/>
</dbReference>
<dbReference type="InterPro" id="IPR003835">
    <property type="entry name" value="Glyco_trans_19"/>
</dbReference>
<dbReference type="NCBIfam" id="TIGR00215">
    <property type="entry name" value="lpxB"/>
    <property type="match status" value="1"/>
</dbReference>
<dbReference type="PANTHER" id="PTHR30372">
    <property type="entry name" value="LIPID-A-DISACCHARIDE SYNTHASE"/>
    <property type="match status" value="1"/>
</dbReference>
<dbReference type="PANTHER" id="PTHR30372:SF4">
    <property type="entry name" value="LIPID-A-DISACCHARIDE SYNTHASE, MITOCHONDRIAL-RELATED"/>
    <property type="match status" value="1"/>
</dbReference>
<dbReference type="Pfam" id="PF02684">
    <property type="entry name" value="LpxB"/>
    <property type="match status" value="1"/>
</dbReference>
<dbReference type="SUPFAM" id="SSF53756">
    <property type="entry name" value="UDP-Glycosyltransferase/glycogen phosphorylase"/>
    <property type="match status" value="1"/>
</dbReference>